<keyword id="KW-0030">Aminoacyl-tRNA synthetase</keyword>
<keyword id="KW-0067">ATP-binding</keyword>
<keyword id="KW-0963">Cytoplasm</keyword>
<keyword id="KW-0436">Ligase</keyword>
<keyword id="KW-0460">Magnesium</keyword>
<keyword id="KW-0479">Metal-binding</keyword>
<keyword id="KW-0547">Nucleotide-binding</keyword>
<keyword id="KW-0648">Protein biosynthesis</keyword>
<keyword id="KW-0694">RNA-binding</keyword>
<keyword id="KW-0820">tRNA-binding</keyword>
<reference key="1">
    <citation type="journal article" date="2005" name="PLoS Biol.">
        <title>The genome sequence of Rickettsia felis identifies the first putative conjugative plasmid in an obligate intracellular parasite.</title>
        <authorList>
            <person name="Ogata H."/>
            <person name="Renesto P."/>
            <person name="Audic S."/>
            <person name="Robert C."/>
            <person name="Blanc G."/>
            <person name="Fournier P.-E."/>
            <person name="Parinello H."/>
            <person name="Claverie J.-M."/>
            <person name="Raoult D."/>
        </authorList>
    </citation>
    <scope>NUCLEOTIDE SEQUENCE [LARGE SCALE GENOMIC DNA]</scope>
    <source>
        <strain>ATCC VR-1525 / URRWXCal2</strain>
    </source>
</reference>
<dbReference type="EC" id="6.1.1.20" evidence="1"/>
<dbReference type="EMBL" id="CP000053">
    <property type="protein sequence ID" value="AAY61499.1"/>
    <property type="molecule type" value="Genomic_DNA"/>
</dbReference>
<dbReference type="SMR" id="Q4ULS4"/>
<dbReference type="STRING" id="315456.RF_0648"/>
<dbReference type="KEGG" id="rfe:RF_0648"/>
<dbReference type="eggNOG" id="COG0072">
    <property type="taxonomic scope" value="Bacteria"/>
</dbReference>
<dbReference type="eggNOG" id="COG0073">
    <property type="taxonomic scope" value="Bacteria"/>
</dbReference>
<dbReference type="HOGENOM" id="CLU_016891_0_0_5"/>
<dbReference type="OrthoDB" id="9805455at2"/>
<dbReference type="Proteomes" id="UP000008548">
    <property type="component" value="Chromosome"/>
</dbReference>
<dbReference type="GO" id="GO:0009328">
    <property type="term" value="C:phenylalanine-tRNA ligase complex"/>
    <property type="evidence" value="ECO:0007669"/>
    <property type="project" value="TreeGrafter"/>
</dbReference>
<dbReference type="GO" id="GO:0005524">
    <property type="term" value="F:ATP binding"/>
    <property type="evidence" value="ECO:0007669"/>
    <property type="project" value="UniProtKB-UniRule"/>
</dbReference>
<dbReference type="GO" id="GO:0000287">
    <property type="term" value="F:magnesium ion binding"/>
    <property type="evidence" value="ECO:0007669"/>
    <property type="project" value="UniProtKB-UniRule"/>
</dbReference>
<dbReference type="GO" id="GO:0004826">
    <property type="term" value="F:phenylalanine-tRNA ligase activity"/>
    <property type="evidence" value="ECO:0007669"/>
    <property type="project" value="UniProtKB-UniRule"/>
</dbReference>
<dbReference type="GO" id="GO:0000049">
    <property type="term" value="F:tRNA binding"/>
    <property type="evidence" value="ECO:0007669"/>
    <property type="project" value="UniProtKB-KW"/>
</dbReference>
<dbReference type="GO" id="GO:0006432">
    <property type="term" value="P:phenylalanyl-tRNA aminoacylation"/>
    <property type="evidence" value="ECO:0007669"/>
    <property type="project" value="UniProtKB-UniRule"/>
</dbReference>
<dbReference type="CDD" id="cd00769">
    <property type="entry name" value="PheRS_beta_core"/>
    <property type="match status" value="1"/>
</dbReference>
<dbReference type="CDD" id="cd02796">
    <property type="entry name" value="tRNA_bind_bactPheRS"/>
    <property type="match status" value="1"/>
</dbReference>
<dbReference type="FunFam" id="2.40.50.140:FF:000045">
    <property type="entry name" value="Phenylalanine--tRNA ligase beta subunit"/>
    <property type="match status" value="1"/>
</dbReference>
<dbReference type="Gene3D" id="3.30.56.10">
    <property type="match status" value="2"/>
</dbReference>
<dbReference type="Gene3D" id="3.30.930.10">
    <property type="entry name" value="Bira Bifunctional Protein, Domain 2"/>
    <property type="match status" value="1"/>
</dbReference>
<dbReference type="Gene3D" id="3.30.70.380">
    <property type="entry name" value="Ferrodoxin-fold anticodon-binding domain"/>
    <property type="match status" value="1"/>
</dbReference>
<dbReference type="Gene3D" id="2.40.50.140">
    <property type="entry name" value="Nucleic acid-binding proteins"/>
    <property type="match status" value="1"/>
</dbReference>
<dbReference type="Gene3D" id="3.50.40.10">
    <property type="entry name" value="Phenylalanyl-trna Synthetase, Chain B, domain 3"/>
    <property type="match status" value="1"/>
</dbReference>
<dbReference type="HAMAP" id="MF_00283">
    <property type="entry name" value="Phe_tRNA_synth_beta1"/>
    <property type="match status" value="1"/>
</dbReference>
<dbReference type="InterPro" id="IPR045864">
    <property type="entry name" value="aa-tRNA-synth_II/BPL/LPL"/>
</dbReference>
<dbReference type="InterPro" id="IPR005146">
    <property type="entry name" value="B3/B4_tRNA-bd"/>
</dbReference>
<dbReference type="InterPro" id="IPR009061">
    <property type="entry name" value="DNA-bd_dom_put_sf"/>
</dbReference>
<dbReference type="InterPro" id="IPR005121">
    <property type="entry name" value="Fdx_antiC-bd"/>
</dbReference>
<dbReference type="InterPro" id="IPR036690">
    <property type="entry name" value="Fdx_antiC-bd_sf"/>
</dbReference>
<dbReference type="InterPro" id="IPR012340">
    <property type="entry name" value="NA-bd_OB-fold"/>
</dbReference>
<dbReference type="InterPro" id="IPR045060">
    <property type="entry name" value="Phe-tRNA-ligase_IIc_bsu"/>
</dbReference>
<dbReference type="InterPro" id="IPR004532">
    <property type="entry name" value="Phe-tRNA-ligase_IIc_bsu_bact"/>
</dbReference>
<dbReference type="InterPro" id="IPR020825">
    <property type="entry name" value="Phe-tRNA_synthase-like_B3/B4"/>
</dbReference>
<dbReference type="InterPro" id="IPR041616">
    <property type="entry name" value="PheRS_beta_core"/>
</dbReference>
<dbReference type="InterPro" id="IPR002547">
    <property type="entry name" value="tRNA-bd_dom"/>
</dbReference>
<dbReference type="InterPro" id="IPR033714">
    <property type="entry name" value="tRNA_bind_bactPheRS"/>
</dbReference>
<dbReference type="InterPro" id="IPR005147">
    <property type="entry name" value="tRNA_synthase_B5-dom"/>
</dbReference>
<dbReference type="NCBIfam" id="TIGR00472">
    <property type="entry name" value="pheT_bact"/>
    <property type="match status" value="1"/>
</dbReference>
<dbReference type="NCBIfam" id="NF045760">
    <property type="entry name" value="YtpR"/>
    <property type="match status" value="1"/>
</dbReference>
<dbReference type="PANTHER" id="PTHR10947:SF0">
    <property type="entry name" value="PHENYLALANINE--TRNA LIGASE BETA SUBUNIT"/>
    <property type="match status" value="1"/>
</dbReference>
<dbReference type="PANTHER" id="PTHR10947">
    <property type="entry name" value="PHENYLALANYL-TRNA SYNTHETASE BETA CHAIN AND LEUCINE-RICH REPEAT-CONTAINING PROTEIN 47"/>
    <property type="match status" value="1"/>
</dbReference>
<dbReference type="Pfam" id="PF03483">
    <property type="entry name" value="B3_4"/>
    <property type="match status" value="1"/>
</dbReference>
<dbReference type="Pfam" id="PF03484">
    <property type="entry name" value="B5"/>
    <property type="match status" value="1"/>
</dbReference>
<dbReference type="Pfam" id="PF03147">
    <property type="entry name" value="FDX-ACB"/>
    <property type="match status" value="1"/>
</dbReference>
<dbReference type="Pfam" id="PF01588">
    <property type="entry name" value="tRNA_bind"/>
    <property type="match status" value="1"/>
</dbReference>
<dbReference type="Pfam" id="PF17759">
    <property type="entry name" value="tRNA_synthFbeta"/>
    <property type="match status" value="1"/>
</dbReference>
<dbReference type="SMART" id="SM00873">
    <property type="entry name" value="B3_4"/>
    <property type="match status" value="1"/>
</dbReference>
<dbReference type="SMART" id="SM00874">
    <property type="entry name" value="B5"/>
    <property type="match status" value="1"/>
</dbReference>
<dbReference type="SMART" id="SM00896">
    <property type="entry name" value="FDX-ACB"/>
    <property type="match status" value="1"/>
</dbReference>
<dbReference type="SUPFAM" id="SSF54991">
    <property type="entry name" value="Anticodon-binding domain of PheRS"/>
    <property type="match status" value="1"/>
</dbReference>
<dbReference type="SUPFAM" id="SSF55681">
    <property type="entry name" value="Class II aaRS and biotin synthetases"/>
    <property type="match status" value="1"/>
</dbReference>
<dbReference type="SUPFAM" id="SSF50249">
    <property type="entry name" value="Nucleic acid-binding proteins"/>
    <property type="match status" value="1"/>
</dbReference>
<dbReference type="SUPFAM" id="SSF56037">
    <property type="entry name" value="PheT/TilS domain"/>
    <property type="match status" value="1"/>
</dbReference>
<dbReference type="SUPFAM" id="SSF46955">
    <property type="entry name" value="Putative DNA-binding domain"/>
    <property type="match status" value="1"/>
</dbReference>
<dbReference type="PROSITE" id="PS51483">
    <property type="entry name" value="B5"/>
    <property type="match status" value="1"/>
</dbReference>
<dbReference type="PROSITE" id="PS51447">
    <property type="entry name" value="FDX_ACB"/>
    <property type="match status" value="1"/>
</dbReference>
<dbReference type="PROSITE" id="PS50886">
    <property type="entry name" value="TRBD"/>
    <property type="match status" value="1"/>
</dbReference>
<protein>
    <recommendedName>
        <fullName evidence="1">Phenylalanine--tRNA ligase beta subunit</fullName>
        <ecNumber evidence="1">6.1.1.20</ecNumber>
    </recommendedName>
    <alternativeName>
        <fullName evidence="1">Phenylalanyl-tRNA synthetase beta subunit</fullName>
        <shortName evidence="1">PheRS</shortName>
    </alternativeName>
</protein>
<gene>
    <name evidence="1" type="primary">pheT</name>
    <name type="ordered locus">RF_0648</name>
</gene>
<sequence>MKFTLSWLKQFLETSSTVIEIAEALTAIGLEVEEVIDKAAELQKFEVAYIASTKPHPSADKLKLCDVETKSGMRQIVCGASNARAGIKVVLANIGIEIPNGKFKIKESIIRGEKSCGMLCSEEELLLASESEGIIELYEDAVVGENFTKYYGLDDPIFVINVTPNRGDALGVYGIARDLAAKGIGILKELEIPEIKSTFTSKMKLNVQDKEACPLFTFREIRNLKNKPSPDWLRKLLKNVGVKTISSLVDVTNYISYSFGQPMHAYDADRIKGGISVARHCEKCSDEAISGQQKEIAAAALQPRNDVAKFHALNGKEYLLTENDLAIKDESGIQGLAGVIGGAKSSCTDSTTNIILEAACFNAKMVAASGRRFQIDTDARYRNERNIDRNFTEKALDIATNLILSICGNGEVSEVVKFGEKEPQKKPLDFSAYYLEKITGIKLSIKEIEAILNELGFITDVKGEIIKVIAPSWRHDITILEDIAEEITRIYGYDKIESIKLPELDQDNNKLREYKRISSFKRILASKGYDEVVTNSFMSSEDAKLFAELKEELFLLNPISIGDNYMRPTILPNLLSIVSKNLARSIKDMAFFEVGPSFIDLNTEATYLTAIISGSYNNKNPHSLGRGYDIFDLKGDLELVVDYAGLSIDKCIATNGTALPQYYHPTRAVNIGLGKNLLGHFGQIHPKILKYYDINQEIFAFELNITNLPLIKAKFGKREEFAVSDFQANFRDYAFIVDQDHRVGEIISYINNFNKKLVKSVILFDIYSGDKLPESKKSIAIKIELQADDRTLTEADLNLFSQDLIAAIEQKFQGTLRE</sequence>
<evidence type="ECO:0000255" key="1">
    <source>
        <dbReference type="HAMAP-Rule" id="MF_00283"/>
    </source>
</evidence>
<name>SYFB_RICFE</name>
<accession>Q4ULS4</accession>
<organism>
    <name type="scientific">Rickettsia felis (strain ATCC VR-1525 / URRWXCal2)</name>
    <name type="common">Rickettsia azadi</name>
    <dbReference type="NCBI Taxonomy" id="315456"/>
    <lineage>
        <taxon>Bacteria</taxon>
        <taxon>Pseudomonadati</taxon>
        <taxon>Pseudomonadota</taxon>
        <taxon>Alphaproteobacteria</taxon>
        <taxon>Rickettsiales</taxon>
        <taxon>Rickettsiaceae</taxon>
        <taxon>Rickettsieae</taxon>
        <taxon>Rickettsia</taxon>
        <taxon>spotted fever group</taxon>
    </lineage>
</organism>
<proteinExistence type="inferred from homology"/>
<comment type="catalytic activity">
    <reaction evidence="1">
        <text>tRNA(Phe) + L-phenylalanine + ATP = L-phenylalanyl-tRNA(Phe) + AMP + diphosphate + H(+)</text>
        <dbReference type="Rhea" id="RHEA:19413"/>
        <dbReference type="Rhea" id="RHEA-COMP:9668"/>
        <dbReference type="Rhea" id="RHEA-COMP:9699"/>
        <dbReference type="ChEBI" id="CHEBI:15378"/>
        <dbReference type="ChEBI" id="CHEBI:30616"/>
        <dbReference type="ChEBI" id="CHEBI:33019"/>
        <dbReference type="ChEBI" id="CHEBI:58095"/>
        <dbReference type="ChEBI" id="CHEBI:78442"/>
        <dbReference type="ChEBI" id="CHEBI:78531"/>
        <dbReference type="ChEBI" id="CHEBI:456215"/>
        <dbReference type="EC" id="6.1.1.20"/>
    </reaction>
</comment>
<comment type="cofactor">
    <cofactor evidence="1">
        <name>Mg(2+)</name>
        <dbReference type="ChEBI" id="CHEBI:18420"/>
    </cofactor>
    <text evidence="1">Binds 2 magnesium ions per tetramer.</text>
</comment>
<comment type="subunit">
    <text evidence="1">Tetramer of two alpha and two beta subunits.</text>
</comment>
<comment type="subcellular location">
    <subcellularLocation>
        <location evidence="1">Cytoplasm</location>
    </subcellularLocation>
</comment>
<comment type="similarity">
    <text evidence="1">Belongs to the phenylalanyl-tRNA synthetase beta subunit family. Type 1 subfamily.</text>
</comment>
<feature type="chain" id="PRO_0000232084" description="Phenylalanine--tRNA ligase beta subunit">
    <location>
        <begin position="1"/>
        <end position="818"/>
    </location>
</feature>
<feature type="domain" description="tRNA-binding" evidence="1">
    <location>
        <begin position="39"/>
        <end position="148"/>
    </location>
</feature>
<feature type="domain" description="B5" evidence="1">
    <location>
        <begin position="423"/>
        <end position="498"/>
    </location>
</feature>
<feature type="domain" description="FDX-ACB" evidence="1">
    <location>
        <begin position="724"/>
        <end position="817"/>
    </location>
</feature>
<feature type="binding site" evidence="1">
    <location>
        <position position="476"/>
    </location>
    <ligand>
        <name>Mg(2+)</name>
        <dbReference type="ChEBI" id="CHEBI:18420"/>
        <note>shared with alpha subunit</note>
    </ligand>
</feature>
<feature type="binding site" evidence="1">
    <location>
        <position position="482"/>
    </location>
    <ligand>
        <name>Mg(2+)</name>
        <dbReference type="ChEBI" id="CHEBI:18420"/>
        <note>shared with alpha subunit</note>
    </ligand>
</feature>
<feature type="binding site" evidence="1">
    <location>
        <position position="485"/>
    </location>
    <ligand>
        <name>Mg(2+)</name>
        <dbReference type="ChEBI" id="CHEBI:18420"/>
        <note>shared with alpha subunit</note>
    </ligand>
</feature>
<feature type="binding site" evidence="1">
    <location>
        <position position="486"/>
    </location>
    <ligand>
        <name>Mg(2+)</name>
        <dbReference type="ChEBI" id="CHEBI:18420"/>
        <note>shared with alpha subunit</note>
    </ligand>
</feature>